<dbReference type="EC" id="2.8.1.8" evidence="1"/>
<dbReference type="EMBL" id="CH963876">
    <property type="protein sequence ID" value="EDW76835.1"/>
    <property type="molecule type" value="Genomic_DNA"/>
</dbReference>
<dbReference type="SMR" id="B4MXR6"/>
<dbReference type="STRING" id="7260.B4MXR6"/>
<dbReference type="EnsemblMetazoa" id="FBtr0248340">
    <property type="protein sequence ID" value="FBpp0246832"/>
    <property type="gene ID" value="FBgn0219688"/>
</dbReference>
<dbReference type="EnsemblMetazoa" id="XM_002065813.4">
    <property type="protein sequence ID" value="XP_002065849.1"/>
    <property type="gene ID" value="LOC6642928"/>
</dbReference>
<dbReference type="GeneID" id="6642928"/>
<dbReference type="KEGG" id="dwi:6642928"/>
<dbReference type="CTD" id="40259"/>
<dbReference type="eggNOG" id="KOG2672">
    <property type="taxonomic scope" value="Eukaryota"/>
</dbReference>
<dbReference type="HOGENOM" id="CLU_033144_1_2_1"/>
<dbReference type="OMA" id="PYCDIDF"/>
<dbReference type="OrthoDB" id="3231at2759"/>
<dbReference type="PhylomeDB" id="B4MXR6"/>
<dbReference type="UniPathway" id="UPA00538">
    <property type="reaction ID" value="UER00593"/>
</dbReference>
<dbReference type="ChiTaRS" id="Las">
    <property type="organism name" value="fly"/>
</dbReference>
<dbReference type="Proteomes" id="UP000007798">
    <property type="component" value="Unassembled WGS sequence"/>
</dbReference>
<dbReference type="GO" id="GO:0005739">
    <property type="term" value="C:mitochondrion"/>
    <property type="evidence" value="ECO:0007669"/>
    <property type="project" value="UniProtKB-SubCell"/>
</dbReference>
<dbReference type="GO" id="GO:0051539">
    <property type="term" value="F:4 iron, 4 sulfur cluster binding"/>
    <property type="evidence" value="ECO:0007669"/>
    <property type="project" value="UniProtKB-UniRule"/>
</dbReference>
<dbReference type="GO" id="GO:0016992">
    <property type="term" value="F:lipoate synthase activity"/>
    <property type="evidence" value="ECO:0007669"/>
    <property type="project" value="UniProtKB-UniRule"/>
</dbReference>
<dbReference type="GO" id="GO:0046872">
    <property type="term" value="F:metal ion binding"/>
    <property type="evidence" value="ECO:0007669"/>
    <property type="project" value="UniProtKB-KW"/>
</dbReference>
<dbReference type="FunFam" id="3.20.20.70:FF:000036">
    <property type="entry name" value="Lipoyl synthase, mitochondrial"/>
    <property type="match status" value="1"/>
</dbReference>
<dbReference type="Gene3D" id="3.20.20.70">
    <property type="entry name" value="Aldolase class I"/>
    <property type="match status" value="1"/>
</dbReference>
<dbReference type="HAMAP" id="MF_00206">
    <property type="entry name" value="Lipoyl_synth"/>
    <property type="match status" value="1"/>
</dbReference>
<dbReference type="InterPro" id="IPR013785">
    <property type="entry name" value="Aldolase_TIM"/>
</dbReference>
<dbReference type="InterPro" id="IPR006638">
    <property type="entry name" value="Elp3/MiaA/NifB-like_rSAM"/>
</dbReference>
<dbReference type="InterPro" id="IPR031691">
    <property type="entry name" value="LIAS_N"/>
</dbReference>
<dbReference type="InterPro" id="IPR003698">
    <property type="entry name" value="Lipoyl_synth"/>
</dbReference>
<dbReference type="InterPro" id="IPR007197">
    <property type="entry name" value="rSAM"/>
</dbReference>
<dbReference type="NCBIfam" id="TIGR00510">
    <property type="entry name" value="lipA"/>
    <property type="match status" value="1"/>
</dbReference>
<dbReference type="NCBIfam" id="NF004019">
    <property type="entry name" value="PRK05481.1"/>
    <property type="match status" value="1"/>
</dbReference>
<dbReference type="NCBIfam" id="NF009544">
    <property type="entry name" value="PRK12928.1"/>
    <property type="match status" value="1"/>
</dbReference>
<dbReference type="PANTHER" id="PTHR10949">
    <property type="entry name" value="LIPOYL SYNTHASE"/>
    <property type="match status" value="1"/>
</dbReference>
<dbReference type="PANTHER" id="PTHR10949:SF0">
    <property type="entry name" value="LIPOYL SYNTHASE, MITOCHONDRIAL"/>
    <property type="match status" value="1"/>
</dbReference>
<dbReference type="Pfam" id="PF16881">
    <property type="entry name" value="LIAS_N"/>
    <property type="match status" value="1"/>
</dbReference>
<dbReference type="Pfam" id="PF04055">
    <property type="entry name" value="Radical_SAM"/>
    <property type="match status" value="1"/>
</dbReference>
<dbReference type="PIRSF" id="PIRSF005963">
    <property type="entry name" value="Lipoyl_synth"/>
    <property type="match status" value="1"/>
</dbReference>
<dbReference type="SFLD" id="SFLDF00271">
    <property type="entry name" value="lipoyl_synthase"/>
    <property type="match status" value="1"/>
</dbReference>
<dbReference type="SFLD" id="SFLDG01058">
    <property type="entry name" value="lipoyl_synthase_like"/>
    <property type="match status" value="1"/>
</dbReference>
<dbReference type="SMART" id="SM00729">
    <property type="entry name" value="Elp3"/>
    <property type="match status" value="1"/>
</dbReference>
<dbReference type="SUPFAM" id="SSF102114">
    <property type="entry name" value="Radical SAM enzymes"/>
    <property type="match status" value="1"/>
</dbReference>
<dbReference type="PROSITE" id="PS51918">
    <property type="entry name" value="RADICAL_SAM"/>
    <property type="match status" value="1"/>
</dbReference>
<reference key="1">
    <citation type="journal article" date="2007" name="Nature">
        <title>Evolution of genes and genomes on the Drosophila phylogeny.</title>
        <authorList>
            <consortium name="Drosophila 12 genomes consortium"/>
        </authorList>
    </citation>
    <scope>NUCLEOTIDE SEQUENCE [LARGE SCALE GENOMIC DNA]</scope>
    <source>
        <strain>Tucson 14030-0811.24</strain>
    </source>
</reference>
<accession>B4MXR6</accession>
<gene>
    <name evidence="1" type="primary">Las</name>
    <name type="ORF">GK17689</name>
</gene>
<protein>
    <recommendedName>
        <fullName evidence="1">Lipoyl synthase, mitochondrial</fullName>
        <ecNumber evidence="1">2.8.1.8</ecNumber>
    </recommendedName>
    <alternativeName>
        <fullName evidence="1">Lipoate synthase</fullName>
        <shortName evidence="1">LS</shortName>
        <shortName evidence="1">Lip-syn</shortName>
    </alternativeName>
    <alternativeName>
        <fullName evidence="1">Lipoic acid synthase</fullName>
    </alternativeName>
</protein>
<proteinExistence type="inferred from homology"/>
<comment type="function">
    <text evidence="1">Catalyzes the radical-mediated insertion of two sulfur atoms into the C-6 and C-8 positions of the octanoyl moiety bound to the lipoyl domains of lipoate-dependent enzymes, thereby converting the octanoylated domains into lipoylated derivatives.</text>
</comment>
<comment type="catalytic activity">
    <reaction evidence="1">
        <text>[[Fe-S] cluster scaffold protein carrying a second [4Fe-4S](2+) cluster] + N(6)-octanoyl-L-lysyl-[protein] + 2 oxidized [2Fe-2S]-[ferredoxin] + 2 S-adenosyl-L-methionine + 4 H(+) = [[Fe-S] cluster scaffold protein] + N(6)-[(R)-dihydrolipoyl]-L-lysyl-[protein] + 4 Fe(3+) + 2 hydrogen sulfide + 2 5'-deoxyadenosine + 2 L-methionine + 2 reduced [2Fe-2S]-[ferredoxin]</text>
        <dbReference type="Rhea" id="RHEA:16585"/>
        <dbReference type="Rhea" id="RHEA-COMP:9928"/>
        <dbReference type="Rhea" id="RHEA-COMP:10000"/>
        <dbReference type="Rhea" id="RHEA-COMP:10001"/>
        <dbReference type="Rhea" id="RHEA-COMP:10475"/>
        <dbReference type="Rhea" id="RHEA-COMP:14568"/>
        <dbReference type="Rhea" id="RHEA-COMP:14569"/>
        <dbReference type="ChEBI" id="CHEBI:15378"/>
        <dbReference type="ChEBI" id="CHEBI:17319"/>
        <dbReference type="ChEBI" id="CHEBI:29034"/>
        <dbReference type="ChEBI" id="CHEBI:29919"/>
        <dbReference type="ChEBI" id="CHEBI:33722"/>
        <dbReference type="ChEBI" id="CHEBI:33737"/>
        <dbReference type="ChEBI" id="CHEBI:33738"/>
        <dbReference type="ChEBI" id="CHEBI:57844"/>
        <dbReference type="ChEBI" id="CHEBI:59789"/>
        <dbReference type="ChEBI" id="CHEBI:78809"/>
        <dbReference type="ChEBI" id="CHEBI:83100"/>
        <dbReference type="EC" id="2.8.1.8"/>
    </reaction>
</comment>
<comment type="cofactor">
    <cofactor evidence="1">
        <name>[4Fe-4S] cluster</name>
        <dbReference type="ChEBI" id="CHEBI:49883"/>
    </cofactor>
    <text evidence="1">Binds 2 [4Fe-4S] clusters per subunit. One cluster is coordinated with 3 cysteines and an exchangeable S-adenosyl-L-methionine.</text>
</comment>
<comment type="pathway">
    <text evidence="1">Protein modification; protein lipoylation via endogenous pathway; protein N(6)-(lipoyl)lysine from octanoyl-[acyl-carrier-protein]: step 2/2.</text>
</comment>
<comment type="subcellular location">
    <subcellularLocation>
        <location evidence="1">Mitochondrion</location>
    </subcellularLocation>
</comment>
<comment type="miscellaneous">
    <text evidence="1">This protein may be expected to contain an N-terminal transit peptide but none has been predicted.</text>
</comment>
<comment type="similarity">
    <text evidence="1">Belongs to the radical SAM superfamily. Lipoyl synthase family.</text>
</comment>
<sequence>MLRTIKSPIKVIVRPASASASANAEKLDEIRERLAKGPSFQDFIQNPNNTKNEWDNYDGKLRREKVEEQRLRLPPWLKTTIPMGKNYAKIKDQLRELKLSTVCEEARCPNIGECWGGGEHGTQTATIMLMGDTCTRGCRFCSVKTARAPPPLDENEPVNTAKAVASWGLDYIVLTSVDRDDLSDGGSKHIAQTVKEIKARNQNIFVECLVPDFRGDLECVKTIANCGLDVYAHNIETVEKLTPFVRDRRAHYRQTLKVLSEAKRFNPNLITKSSIMLGLGETDAEVEQTMLDLREVGVECLTLGQYMQPTKKHLKVIEYVTPEKFKHWEERGNQLGFLYTASGPLVRSSYKAGEFFITSILANRKKQNDAPK</sequence>
<keyword id="KW-0004">4Fe-4S</keyword>
<keyword id="KW-0408">Iron</keyword>
<keyword id="KW-0411">Iron-sulfur</keyword>
<keyword id="KW-0479">Metal-binding</keyword>
<keyword id="KW-0496">Mitochondrion</keyword>
<keyword id="KW-1185">Reference proteome</keyword>
<keyword id="KW-0949">S-adenosyl-L-methionine</keyword>
<keyword id="KW-0808">Transferase</keyword>
<organism>
    <name type="scientific">Drosophila willistoni</name>
    <name type="common">Fruit fly</name>
    <dbReference type="NCBI Taxonomy" id="7260"/>
    <lineage>
        <taxon>Eukaryota</taxon>
        <taxon>Metazoa</taxon>
        <taxon>Ecdysozoa</taxon>
        <taxon>Arthropoda</taxon>
        <taxon>Hexapoda</taxon>
        <taxon>Insecta</taxon>
        <taxon>Pterygota</taxon>
        <taxon>Neoptera</taxon>
        <taxon>Endopterygota</taxon>
        <taxon>Diptera</taxon>
        <taxon>Brachycera</taxon>
        <taxon>Muscomorpha</taxon>
        <taxon>Ephydroidea</taxon>
        <taxon>Drosophilidae</taxon>
        <taxon>Drosophila</taxon>
        <taxon>Sophophora</taxon>
    </lineage>
</organism>
<name>LIAS_DROWI</name>
<feature type="chain" id="PRO_0000398223" description="Lipoyl synthase, mitochondrial">
    <location>
        <begin position="1"/>
        <end position="372"/>
    </location>
</feature>
<feature type="domain" description="Radical SAM core" evidence="2">
    <location>
        <begin position="119"/>
        <end position="338"/>
    </location>
</feature>
<feature type="binding site" evidence="1">
    <location>
        <position position="103"/>
    </location>
    <ligand>
        <name>[4Fe-4S] cluster</name>
        <dbReference type="ChEBI" id="CHEBI:49883"/>
        <label>1</label>
    </ligand>
</feature>
<feature type="binding site" evidence="1">
    <location>
        <position position="108"/>
    </location>
    <ligand>
        <name>[4Fe-4S] cluster</name>
        <dbReference type="ChEBI" id="CHEBI:49883"/>
        <label>1</label>
    </ligand>
</feature>
<feature type="binding site" evidence="1">
    <location>
        <position position="114"/>
    </location>
    <ligand>
        <name>[4Fe-4S] cluster</name>
        <dbReference type="ChEBI" id="CHEBI:49883"/>
        <label>1</label>
    </ligand>
</feature>
<feature type="binding site" evidence="1">
    <location>
        <position position="134"/>
    </location>
    <ligand>
        <name>[4Fe-4S] cluster</name>
        <dbReference type="ChEBI" id="CHEBI:49883"/>
        <label>2</label>
        <note>4Fe-4S-S-AdoMet</note>
    </ligand>
</feature>
<feature type="binding site" evidence="1">
    <location>
        <position position="138"/>
    </location>
    <ligand>
        <name>[4Fe-4S] cluster</name>
        <dbReference type="ChEBI" id="CHEBI:49883"/>
        <label>2</label>
        <note>4Fe-4S-S-AdoMet</note>
    </ligand>
</feature>
<feature type="binding site" evidence="1">
    <location>
        <position position="141"/>
    </location>
    <ligand>
        <name>[4Fe-4S] cluster</name>
        <dbReference type="ChEBI" id="CHEBI:49883"/>
        <label>2</label>
        <note>4Fe-4S-S-AdoMet</note>
    </ligand>
</feature>
<feature type="binding site" evidence="1">
    <location>
        <position position="349"/>
    </location>
    <ligand>
        <name>[4Fe-4S] cluster</name>
        <dbReference type="ChEBI" id="CHEBI:49883"/>
        <label>1</label>
    </ligand>
</feature>
<evidence type="ECO:0000255" key="1">
    <source>
        <dbReference type="HAMAP-Rule" id="MF_03123"/>
    </source>
</evidence>
<evidence type="ECO:0000255" key="2">
    <source>
        <dbReference type="PROSITE-ProRule" id="PRU01266"/>
    </source>
</evidence>